<accession>Q76M68</accession>
<gene>
    <name type="primary">Iqsec3</name>
    <name type="synonym">Sag</name>
</gene>
<reference key="1">
    <citation type="journal article" date="2004" name="J. Neurochem.">
        <title>Brain-specific potential guanine nucleotide exchange factor for Arf, synArfGEF (Po), is localized to postsynaptic density.</title>
        <authorList>
            <person name="Inaba Y."/>
            <person name="Tian Q.B."/>
            <person name="Okano A."/>
            <person name="Zhang J.-P."/>
            <person name="Sakagami H."/>
            <person name="Miyazawa S."/>
            <person name="Li W."/>
            <person name="Komiyama A."/>
            <person name="Inokuchi K."/>
            <person name="Kondo H."/>
            <person name="Suzuki T."/>
        </authorList>
    </citation>
    <scope>NUCLEOTIDE SEQUENCE [MRNA]</scope>
    <scope>TISSUE SPECIFICITY</scope>
    <scope>DEVELOPMENTAL STAGE</scope>
    <scope>INTERACTION WITH DLG1 AND DLG4</scope>
    <source>
        <tissue>Brain</tissue>
    </source>
</reference>
<reference key="2">
    <citation type="journal article" date="2012" name="Nat. Commun.">
        <title>Quantitative maps of protein phosphorylation sites across 14 different rat organs and tissues.</title>
        <authorList>
            <person name="Lundby A."/>
            <person name="Secher A."/>
            <person name="Lage K."/>
            <person name="Nordsborg N.B."/>
            <person name="Dmytriyev A."/>
            <person name="Lundby C."/>
            <person name="Olsen J.V."/>
        </authorList>
    </citation>
    <scope>PHOSPHORYLATION [LARGE SCALE ANALYSIS] AT SER-255</scope>
    <scope>IDENTIFICATION BY MASS SPECTROMETRY [LARGE SCALE ANALYSIS]</scope>
</reference>
<comment type="function">
    <text evidence="2">Acts as a guanine nucleotide exchange factor (GEF) for ARF1.</text>
</comment>
<comment type="subunit">
    <text evidence="1 7">Interacts with DLG1 and DLG4 (PubMed:15189337). Interacts with GPHN (By similarity).</text>
</comment>
<comment type="subcellular location">
    <subcellularLocation>
        <location evidence="2">Cytoplasm</location>
    </subcellularLocation>
    <subcellularLocation>
        <location evidence="1">Postsynaptic density</location>
    </subcellularLocation>
</comment>
<comment type="tissue specificity">
    <text evidence="7">Expressed in brain. Localized to dendrites, as well as somas of neuronal cells.</text>
</comment>
<comment type="developmental stage">
    <text evidence="7">Expressed at 18 dpc in hippocampal neurons.</text>
</comment>
<comment type="similarity">
    <text evidence="8">Belongs to the BRAG family.</text>
</comment>
<protein>
    <recommendedName>
        <fullName>IQ motif and SEC7 domain-containing protein 3</fullName>
    </recommendedName>
    <alternativeName>
        <fullName>Potential synaptic guanine nucleotide exchange factor for Arf</fullName>
    </alternativeName>
    <alternativeName>
        <fullName>SynArfGEF-Po</fullName>
    </alternativeName>
</protein>
<feature type="chain" id="PRO_0000245612" description="IQ motif and SEC7 domain-containing protein 3">
    <location>
        <begin position="1"/>
        <end position="1194"/>
    </location>
</feature>
<feature type="domain" description="IQ" evidence="4">
    <location>
        <begin position="311"/>
        <end position="340"/>
    </location>
</feature>
<feature type="domain" description="SEC7" evidence="5">
    <location>
        <begin position="646"/>
        <end position="839"/>
    </location>
</feature>
<feature type="domain" description="PH">
    <location>
        <begin position="852"/>
        <end position="985"/>
    </location>
</feature>
<feature type="region of interest" description="Disordered" evidence="6">
    <location>
        <begin position="62"/>
        <end position="149"/>
    </location>
</feature>
<feature type="region of interest" description="Disordered" evidence="6">
    <location>
        <begin position="229"/>
        <end position="272"/>
    </location>
</feature>
<feature type="region of interest" description="Disordered" evidence="6">
    <location>
        <begin position="439"/>
        <end position="471"/>
    </location>
</feature>
<feature type="region of interest" description="Disordered" evidence="6">
    <location>
        <begin position="515"/>
        <end position="610"/>
    </location>
</feature>
<feature type="region of interest" description="Disordered" evidence="6">
    <location>
        <begin position="1002"/>
        <end position="1099"/>
    </location>
</feature>
<feature type="region of interest" description="Disordered" evidence="6">
    <location>
        <begin position="1137"/>
        <end position="1175"/>
    </location>
</feature>
<feature type="coiled-coil region" evidence="3">
    <location>
        <begin position="20"/>
        <end position="56"/>
    </location>
</feature>
<feature type="compositionally biased region" description="Pro residues" evidence="6">
    <location>
        <begin position="63"/>
        <end position="78"/>
    </location>
</feature>
<feature type="compositionally biased region" description="Low complexity" evidence="6">
    <location>
        <begin position="79"/>
        <end position="92"/>
    </location>
</feature>
<feature type="compositionally biased region" description="Polar residues" evidence="6">
    <location>
        <begin position="122"/>
        <end position="133"/>
    </location>
</feature>
<feature type="compositionally biased region" description="Low complexity" evidence="6">
    <location>
        <begin position="561"/>
        <end position="572"/>
    </location>
</feature>
<feature type="compositionally biased region" description="Low complexity" evidence="6">
    <location>
        <begin position="600"/>
        <end position="610"/>
    </location>
</feature>
<feature type="compositionally biased region" description="Basic and acidic residues" evidence="6">
    <location>
        <begin position="1024"/>
        <end position="1035"/>
    </location>
</feature>
<feature type="compositionally biased region" description="Polar residues" evidence="6">
    <location>
        <begin position="1036"/>
        <end position="1052"/>
    </location>
</feature>
<feature type="compositionally biased region" description="Pro residues" evidence="6">
    <location>
        <begin position="1064"/>
        <end position="1099"/>
    </location>
</feature>
<feature type="compositionally biased region" description="Pro residues" evidence="6">
    <location>
        <begin position="1159"/>
        <end position="1169"/>
    </location>
</feature>
<feature type="modified residue" description="Phosphoserine" evidence="9">
    <location>
        <position position="255"/>
    </location>
</feature>
<proteinExistence type="evidence at protein level"/>
<evidence type="ECO:0000250" key="1">
    <source>
        <dbReference type="UniProtKB" id="Q3TES0"/>
    </source>
</evidence>
<evidence type="ECO:0000250" key="2">
    <source>
        <dbReference type="UniProtKB" id="Q9UPP2"/>
    </source>
</evidence>
<evidence type="ECO:0000255" key="3"/>
<evidence type="ECO:0000255" key="4">
    <source>
        <dbReference type="PROSITE-ProRule" id="PRU00116"/>
    </source>
</evidence>
<evidence type="ECO:0000255" key="5">
    <source>
        <dbReference type="PROSITE-ProRule" id="PRU00189"/>
    </source>
</evidence>
<evidence type="ECO:0000256" key="6">
    <source>
        <dbReference type="SAM" id="MobiDB-lite"/>
    </source>
</evidence>
<evidence type="ECO:0000269" key="7">
    <source>
    </source>
</evidence>
<evidence type="ECO:0000305" key="8"/>
<evidence type="ECO:0007744" key="9">
    <source>
    </source>
</evidence>
<sequence length="1194" mass="129018">MESLLENPVRAVLYLKELTAIVQNQQSLIHTQRQRIDELERRLDELSAENRSLWEHQQLLQAQPPPGLVPPPSAPLPAPAATAPAATAAQEPLQDHGQLIPATPEPPLQHHGQLLAQPQPAPSSRVQTPQSPHQHPVAPGAVADKEKERPSSCCAAAGALLQHASPAALGKGVLSRRPKNETVLHQFCCPATDTEQKPACSDLASQSDGSCAQAGGGMEDSVVAAVAAGRPSAHAPKAQAPELQQEEERPGAVGSPRAGPLRAASPGQQQPALATALCSHTPAASEYELSLDLKNKQIEMLEHKYGGHLVSRRAACTIQTAFRQYQLSKNFEKIRNSLLESRLPRRISLRKVRAPTAESLVAEKALLESCGLLGLPLGRSPSLPPTFAGSLTELEDSFTEQVQSLAKSIDDALSTWSLKTMCSLQESGAYQLHQALHPSAGQPGLETEAAREPDSGPGSGDEAGSLPQGHSGTLMMAFRDVTVQIANQNISVSSSTALSVANCLGAQTAQATAEPAAVQTEQGDAATQEVSEVPASELMDPPVEDSEAAESGAQSAHEPTVAEAVVEEAVATEAEEEEEGAGQAGKGAEAEVGDNSEQLSSSSASTKSAKSGSEVSAAASKEALQAVILSLPRYHCENPASCRSPTLSTDTLRKRLYRIGLNLFNINPDKGIQFLISRGFIPDTPIGVAHFLLQRKGLSRQMIGEFLGNSKKQFNRDVLDCVVDEMDFSNMELDEALRKFQAHIRVQGEAQKVERLIEAFSQRYCMCNPEVVQQFHNPDTIFILAFAIILLNTDMYSPNIKPDRKMMLEDFIRNLRGVDDGADIPRELVVGIYERIQQKELKSNEDHVTYVTKVEKSIVGMKTVLSMPHRRLVCCSRLFEVTDVNKLQKQAAHQREVFLFNDLLVILKLCPKKKSSFTYTFCKAVGLLGMRFHLFENEYYSHGITLATPLSGSEKKQVLHFCALGSDEMQKFVEDLKESIAEVTELEQIRIEWELERQQGTKTLSARSAGAQGDPQSKQGSPTAKREAMAGEKATESSGEVSIHNRLQTFQHSPKLGVERGAPAPSPPTSPPPPLPPDPQPSPLREQPPPLPLPPPTPPGTLVQCQQIVKVIVLDKPCLARMEPLLSQALSCYASSSSDSCGSTPLRGPGSPVKVIHQPPLPPPPPPYNHPHQFCPPGSLLLRRRYSSGSRSLV</sequence>
<dbReference type="EMBL" id="AB057643">
    <property type="protein sequence ID" value="BAD14305.1"/>
    <property type="molecule type" value="mRNA"/>
</dbReference>
<dbReference type="RefSeq" id="NP_997500.1">
    <property type="nucleotide sequence ID" value="NM_207617.1"/>
</dbReference>
<dbReference type="SMR" id="Q76M68"/>
<dbReference type="BioGRID" id="267113">
    <property type="interactions" value="1"/>
</dbReference>
<dbReference type="FunCoup" id="Q76M68">
    <property type="interactions" value="1004"/>
</dbReference>
<dbReference type="STRING" id="10116.ENSRNOP00000067900"/>
<dbReference type="CarbonylDB" id="Q76M68"/>
<dbReference type="GlyGen" id="Q76M68">
    <property type="glycosylation" value="1 site"/>
</dbReference>
<dbReference type="iPTMnet" id="Q76M68"/>
<dbReference type="PhosphoSitePlus" id="Q76M68"/>
<dbReference type="PaxDb" id="10116-ENSRNOP00000018902"/>
<dbReference type="GeneID" id="404781"/>
<dbReference type="KEGG" id="rno:404781"/>
<dbReference type="UCSC" id="RGD:1593191">
    <property type="organism name" value="rat"/>
</dbReference>
<dbReference type="AGR" id="RGD:1593191"/>
<dbReference type="CTD" id="440073"/>
<dbReference type="RGD" id="1593191">
    <property type="gene designation" value="Iqsec3"/>
</dbReference>
<dbReference type="eggNOG" id="KOG0931">
    <property type="taxonomic scope" value="Eukaryota"/>
</dbReference>
<dbReference type="InParanoid" id="Q76M68"/>
<dbReference type="OrthoDB" id="80632at9989"/>
<dbReference type="PhylomeDB" id="Q76M68"/>
<dbReference type="PRO" id="PR:Q76M68"/>
<dbReference type="Proteomes" id="UP000002494">
    <property type="component" value="Unplaced"/>
</dbReference>
<dbReference type="GO" id="GO:0005737">
    <property type="term" value="C:cytoplasm"/>
    <property type="evidence" value="ECO:0007669"/>
    <property type="project" value="UniProtKB-SubCell"/>
</dbReference>
<dbReference type="GO" id="GO:0098982">
    <property type="term" value="C:GABA-ergic synapse"/>
    <property type="evidence" value="ECO:0000314"/>
    <property type="project" value="SynGO"/>
</dbReference>
<dbReference type="GO" id="GO:0098690">
    <property type="term" value="C:glycinergic synapse"/>
    <property type="evidence" value="ECO:0000266"/>
    <property type="project" value="RGD"/>
</dbReference>
<dbReference type="GO" id="GO:0060077">
    <property type="term" value="C:inhibitory synapse"/>
    <property type="evidence" value="ECO:0000266"/>
    <property type="project" value="RGD"/>
</dbReference>
<dbReference type="GO" id="GO:0014069">
    <property type="term" value="C:postsynaptic density"/>
    <property type="evidence" value="ECO:0000250"/>
    <property type="project" value="UniProtKB"/>
</dbReference>
<dbReference type="GO" id="GO:0045211">
    <property type="term" value="C:postsynaptic membrane"/>
    <property type="evidence" value="ECO:0000266"/>
    <property type="project" value="RGD"/>
</dbReference>
<dbReference type="GO" id="GO:0099629">
    <property type="term" value="C:postsynaptic specialization of symmetric synapse"/>
    <property type="evidence" value="ECO:0000266"/>
    <property type="project" value="RGD"/>
</dbReference>
<dbReference type="GO" id="GO:0005085">
    <property type="term" value="F:guanyl-nucleotide exchange factor activity"/>
    <property type="evidence" value="ECO:0007669"/>
    <property type="project" value="InterPro"/>
</dbReference>
<dbReference type="GO" id="GO:0030036">
    <property type="term" value="P:actin cytoskeleton organization"/>
    <property type="evidence" value="ECO:0000318"/>
    <property type="project" value="GO_Central"/>
</dbReference>
<dbReference type="GO" id="GO:0090630">
    <property type="term" value="P:activation of GTPase activity"/>
    <property type="evidence" value="ECO:0000314"/>
    <property type="project" value="UniProtKB"/>
</dbReference>
<dbReference type="GO" id="GO:0099173">
    <property type="term" value="P:postsynapse organization"/>
    <property type="evidence" value="ECO:0000314"/>
    <property type="project" value="SynGO"/>
</dbReference>
<dbReference type="GO" id="GO:0032012">
    <property type="term" value="P:regulation of ARF protein signal transduction"/>
    <property type="evidence" value="ECO:0007669"/>
    <property type="project" value="InterPro"/>
</dbReference>
<dbReference type="GO" id="GO:0051056">
    <property type="term" value="P:regulation of small GTPase mediated signal transduction"/>
    <property type="evidence" value="ECO:0000314"/>
    <property type="project" value="UniProtKB"/>
</dbReference>
<dbReference type="CDD" id="cd14686">
    <property type="entry name" value="bZIP"/>
    <property type="match status" value="1"/>
</dbReference>
<dbReference type="CDD" id="cd13318">
    <property type="entry name" value="PH_IQSEC"/>
    <property type="match status" value="1"/>
</dbReference>
<dbReference type="CDD" id="cd00171">
    <property type="entry name" value="Sec7"/>
    <property type="match status" value="1"/>
</dbReference>
<dbReference type="FunFam" id="1.10.1000.11:FF:000001">
    <property type="entry name" value="IQ motif and SEC7 domain-containing protein 1"/>
    <property type="match status" value="1"/>
</dbReference>
<dbReference type="FunFam" id="1.10.220.20:FF:000001">
    <property type="entry name" value="IQ motif and SEC7 domain-containing protein 1"/>
    <property type="match status" value="1"/>
</dbReference>
<dbReference type="FunFam" id="2.30.29.30:FF:000096">
    <property type="entry name" value="IQ motif and SEC7 domain-containing protein 3"/>
    <property type="match status" value="1"/>
</dbReference>
<dbReference type="Gene3D" id="1.10.220.20">
    <property type="match status" value="1"/>
</dbReference>
<dbReference type="Gene3D" id="1.10.1000.11">
    <property type="entry name" value="Arf Nucleotide-binding Site Opener,domain 2"/>
    <property type="match status" value="1"/>
</dbReference>
<dbReference type="Gene3D" id="2.30.29.30">
    <property type="entry name" value="Pleckstrin-homology domain (PH domain)/Phosphotyrosine-binding domain (PTB)"/>
    <property type="match status" value="1"/>
</dbReference>
<dbReference type="InterPro" id="IPR033742">
    <property type="entry name" value="IQSEC_PH"/>
</dbReference>
<dbReference type="InterPro" id="IPR011993">
    <property type="entry name" value="PH-like_dom_sf"/>
</dbReference>
<dbReference type="InterPro" id="IPR023394">
    <property type="entry name" value="Sec7_C_sf"/>
</dbReference>
<dbReference type="InterPro" id="IPR000904">
    <property type="entry name" value="Sec7_dom"/>
</dbReference>
<dbReference type="InterPro" id="IPR035999">
    <property type="entry name" value="Sec7_dom_sf"/>
</dbReference>
<dbReference type="PANTHER" id="PTHR10663">
    <property type="entry name" value="GUANYL-NUCLEOTIDE EXCHANGE FACTOR"/>
    <property type="match status" value="1"/>
</dbReference>
<dbReference type="PANTHER" id="PTHR10663:SF318">
    <property type="entry name" value="IQ MOTIF AND SEC7 DOMAIN-CONTAINING PROTEIN 3"/>
    <property type="match status" value="1"/>
</dbReference>
<dbReference type="Pfam" id="PF16453">
    <property type="entry name" value="IQ_SEC7_PH"/>
    <property type="match status" value="1"/>
</dbReference>
<dbReference type="Pfam" id="PF01369">
    <property type="entry name" value="Sec7"/>
    <property type="match status" value="1"/>
</dbReference>
<dbReference type="SMART" id="SM00222">
    <property type="entry name" value="Sec7"/>
    <property type="match status" value="1"/>
</dbReference>
<dbReference type="SUPFAM" id="SSF50729">
    <property type="entry name" value="PH domain-like"/>
    <property type="match status" value="1"/>
</dbReference>
<dbReference type="SUPFAM" id="SSF48425">
    <property type="entry name" value="Sec7 domain"/>
    <property type="match status" value="1"/>
</dbReference>
<dbReference type="PROSITE" id="PS50096">
    <property type="entry name" value="IQ"/>
    <property type="match status" value="1"/>
</dbReference>
<dbReference type="PROSITE" id="PS50190">
    <property type="entry name" value="SEC7"/>
    <property type="match status" value="1"/>
</dbReference>
<keyword id="KW-0175">Coiled coil</keyword>
<keyword id="KW-0963">Cytoplasm</keyword>
<keyword id="KW-0597">Phosphoprotein</keyword>
<keyword id="KW-1185">Reference proteome</keyword>
<keyword id="KW-0770">Synapse</keyword>
<organism>
    <name type="scientific">Rattus norvegicus</name>
    <name type="common">Rat</name>
    <dbReference type="NCBI Taxonomy" id="10116"/>
    <lineage>
        <taxon>Eukaryota</taxon>
        <taxon>Metazoa</taxon>
        <taxon>Chordata</taxon>
        <taxon>Craniata</taxon>
        <taxon>Vertebrata</taxon>
        <taxon>Euteleostomi</taxon>
        <taxon>Mammalia</taxon>
        <taxon>Eutheria</taxon>
        <taxon>Euarchontoglires</taxon>
        <taxon>Glires</taxon>
        <taxon>Rodentia</taxon>
        <taxon>Myomorpha</taxon>
        <taxon>Muroidea</taxon>
        <taxon>Muridae</taxon>
        <taxon>Murinae</taxon>
        <taxon>Rattus</taxon>
    </lineage>
</organism>
<name>IQEC3_RAT</name>